<gene>
    <name type="primary">U55A</name>
</gene>
<keyword id="KW-1185">Reference proteome</keyword>
<name>V55A_HHV7J</name>
<proteinExistence type="predicted"/>
<accession>P52517</accession>
<dbReference type="EMBL" id="U43400">
    <property type="protein sequence ID" value="AAC54717.1"/>
    <property type="molecule type" value="Genomic_DNA"/>
</dbReference>
<dbReference type="PIR" id="T41957">
    <property type="entry name" value="T41957"/>
</dbReference>
<dbReference type="Proteomes" id="UP000009246">
    <property type="component" value="Segment"/>
</dbReference>
<dbReference type="InterPro" id="IPR009479">
    <property type="entry name" value="Herpes_U55"/>
</dbReference>
<dbReference type="Pfam" id="PF06501">
    <property type="entry name" value="Herpes_U55"/>
    <property type="match status" value="1"/>
</dbReference>
<reference key="1">
    <citation type="journal article" date="1996" name="J. Virol.">
        <title>Determination and analysis of the complete nucleotide sequence of human herpesvirus.</title>
        <authorList>
            <person name="Nicholas J."/>
        </authorList>
    </citation>
    <scope>NUCLEOTIDE SEQUENCE [LARGE SCALE GENOMIC DNA]</scope>
</reference>
<organism>
    <name type="scientific">Human herpesvirus 7 (strain JI)</name>
    <name type="common">HHV-7</name>
    <name type="synonym">Human T lymphotropic virus</name>
    <dbReference type="NCBI Taxonomy" id="57278"/>
    <lineage>
        <taxon>Viruses</taxon>
        <taxon>Duplodnaviria</taxon>
        <taxon>Heunggongvirae</taxon>
        <taxon>Peploviricota</taxon>
        <taxon>Herviviricetes</taxon>
        <taxon>Herpesvirales</taxon>
        <taxon>Orthoherpesviridae</taxon>
        <taxon>Betaherpesvirinae</taxon>
        <taxon>Roseolovirus</taxon>
        <taxon>Roseolovirus humanbeta7</taxon>
        <taxon>Human betaherpesvirus 7</taxon>
    </lineage>
</organism>
<organismHost>
    <name type="scientific">Homo sapiens</name>
    <name type="common">Human</name>
    <dbReference type="NCBI Taxonomy" id="9606"/>
</organismHost>
<protein>
    <recommendedName>
        <fullName>Uncharacterized protein U55A</fullName>
    </recommendedName>
</protein>
<feature type="chain" id="PRO_0000116295" description="Uncharacterized protein U55A">
    <location>
        <begin position="1"/>
        <end position="427"/>
    </location>
</feature>
<sequence length="427" mass="49789">MNSTPVSELSQLIQFTVDFNDLQPELNFSPAEITCILSHERPVLLLITDGTENNAECVTLVGHVLKNKKVIKINVFPMIQSINFVNIFALPIFNITSSLLIQDNCYFKENMDPLRFHQFAYLEKGLGTTPIILYSVKNGDLIVNATVTKITWEKNEFQPLLKNSNDQKLETMYCIFTFNTTYCKYWNVFFASATPICNVEMISEHNLSVYKIEYRSPVLFVFLRYLKVMNSRFCVDECSLRLRLSKPNMQSVALNICMPYFNISEEFKTMEIYFPERMTLTPNHITQINLRGTFENPAAVGLFIPKKSNVLSFPFIWQPRETFRIYVYCRNETFVTEHDIIGHVYFISREQFPHSFHPTAHADCKSKVEAAFNSFRINFLGNDFFSDSLPILTVHPMTDFPYEQIQETENIRHNSMNITPRFKRMQL</sequence>